<evidence type="ECO:0000255" key="1">
    <source>
        <dbReference type="PROSITE-ProRule" id="PRU00798"/>
    </source>
</evidence>
<organism>
    <name type="scientific">Oxyura vittata</name>
    <name type="common">Lake duck</name>
    <name type="synonym">Erismatura vittata</name>
    <dbReference type="NCBI Taxonomy" id="8885"/>
    <lineage>
        <taxon>Eukaryota</taxon>
        <taxon>Metazoa</taxon>
        <taxon>Chordata</taxon>
        <taxon>Craniata</taxon>
        <taxon>Vertebrata</taxon>
        <taxon>Euteleostomi</taxon>
        <taxon>Archelosauria</taxon>
        <taxon>Archosauria</taxon>
        <taxon>Dinosauria</taxon>
        <taxon>Saurischia</taxon>
        <taxon>Theropoda</taxon>
        <taxon>Coelurosauria</taxon>
        <taxon>Aves</taxon>
        <taxon>Neognathae</taxon>
        <taxon>Galloanserae</taxon>
        <taxon>Anseriformes</taxon>
        <taxon>Anatidae</taxon>
        <taxon>Anatinae</taxon>
        <taxon>Oxyura</taxon>
    </lineage>
</organism>
<reference key="1">
    <citation type="journal article" date="1987" name="Biochemistry">
        <title>Ovomucoid third domains from 100 avian species: isolation, sequences, and hypervariability of enzyme-inhibitor contact residues.</title>
        <authorList>
            <person name="Laskowski M. Jr."/>
            <person name="Kato I."/>
            <person name="Ardelt W."/>
            <person name="Cook J."/>
            <person name="Denton A."/>
            <person name="Empie M.W."/>
            <person name="Kohr W.J."/>
            <person name="Park S.J."/>
            <person name="Parks K."/>
            <person name="Schatzley B.L."/>
            <person name="Schoenberger O.L."/>
            <person name="Tashiro M."/>
            <person name="Vichot G."/>
            <person name="Whatley H.E."/>
            <person name="Wieczorek A."/>
            <person name="Wieczorek M."/>
        </authorList>
    </citation>
    <scope>PROTEIN SEQUENCE</scope>
</reference>
<feature type="chain" id="PRO_0000073155" description="Ovomucoid">
    <location>
        <begin position="1" status="less than"/>
        <end position="54" status="greater than"/>
    </location>
</feature>
<feature type="domain" description="Kazal-like" evidence="1">
    <location>
        <begin position="4"/>
        <end position="54"/>
    </location>
</feature>
<feature type="site" description="Reactive bond 3">
    <location>
        <begin position="16"/>
        <end position="17"/>
    </location>
</feature>
<feature type="glycosylation site" description="N-linked (GlcNAc...) asparagine">
    <location>
        <position position="43"/>
    </location>
</feature>
<feature type="disulfide bond">
    <location>
        <begin position="6"/>
        <end position="36"/>
    </location>
</feature>
<feature type="disulfide bond">
    <location>
        <begin position="14"/>
        <end position="33"/>
    </location>
</feature>
<feature type="disulfide bond">
    <location>
        <begin position="22"/>
        <end position="54"/>
    </location>
</feature>
<feature type="non-terminal residue">
    <location>
        <position position="1"/>
    </location>
</feature>
<feature type="non-terminal residue">
    <location>
        <position position="54"/>
    </location>
</feature>
<sequence length="54" mass="5816">VATVDCSDYPKPACTMEYMPLCGSDNKTYGNKCNFCNAVVDSNGTLTLSHFGKC</sequence>
<comment type="subcellular location">
    <subcellularLocation>
        <location>Secreted</location>
    </subcellularLocation>
</comment>
<comment type="domain">
    <text>Avian ovomucoid consists of three homologous, tandem Kazal family inhibitory domains.</text>
</comment>
<protein>
    <recommendedName>
        <fullName>Ovomucoid</fullName>
    </recommendedName>
</protein>
<dbReference type="PIR" id="A31443">
    <property type="entry name" value="A31443"/>
</dbReference>
<dbReference type="SMR" id="P68132"/>
<dbReference type="GO" id="GO:0005576">
    <property type="term" value="C:extracellular region"/>
    <property type="evidence" value="ECO:0007669"/>
    <property type="project" value="UniProtKB-SubCell"/>
</dbReference>
<dbReference type="GO" id="GO:0004867">
    <property type="term" value="F:serine-type endopeptidase inhibitor activity"/>
    <property type="evidence" value="ECO:0007669"/>
    <property type="project" value="UniProtKB-KW"/>
</dbReference>
<dbReference type="CDD" id="cd00104">
    <property type="entry name" value="KAZAL_FS"/>
    <property type="match status" value="1"/>
</dbReference>
<dbReference type="FunFam" id="3.30.60.30:FF:000037">
    <property type="entry name" value="Ovomucoid"/>
    <property type="match status" value="1"/>
</dbReference>
<dbReference type="Gene3D" id="3.30.60.30">
    <property type="match status" value="1"/>
</dbReference>
<dbReference type="InterPro" id="IPR051597">
    <property type="entry name" value="Bifunctional_prot_inhibitor"/>
</dbReference>
<dbReference type="InterPro" id="IPR002350">
    <property type="entry name" value="Kazal_dom"/>
</dbReference>
<dbReference type="InterPro" id="IPR036058">
    <property type="entry name" value="Kazal_dom_sf"/>
</dbReference>
<dbReference type="InterPro" id="IPR001239">
    <property type="entry name" value="Prot_inh_Kazal-m"/>
</dbReference>
<dbReference type="PANTHER" id="PTHR47729:SF1">
    <property type="entry name" value="OVOMUCOID-LIKE-RELATED"/>
    <property type="match status" value="1"/>
</dbReference>
<dbReference type="PANTHER" id="PTHR47729">
    <property type="entry name" value="SERINE PEPTIDASE INHIBITOR, KAZAL TYPE 2, TANDEM DUPLICATE 1-RELATED"/>
    <property type="match status" value="1"/>
</dbReference>
<dbReference type="Pfam" id="PF00050">
    <property type="entry name" value="Kazal_1"/>
    <property type="match status" value="1"/>
</dbReference>
<dbReference type="PRINTS" id="PR00290">
    <property type="entry name" value="KAZALINHBTR"/>
</dbReference>
<dbReference type="SMART" id="SM00280">
    <property type="entry name" value="KAZAL"/>
    <property type="match status" value="1"/>
</dbReference>
<dbReference type="SUPFAM" id="SSF100895">
    <property type="entry name" value="Kazal-type serine protease inhibitors"/>
    <property type="match status" value="1"/>
</dbReference>
<dbReference type="PROSITE" id="PS00282">
    <property type="entry name" value="KAZAL_1"/>
    <property type="match status" value="1"/>
</dbReference>
<dbReference type="PROSITE" id="PS51465">
    <property type="entry name" value="KAZAL_2"/>
    <property type="match status" value="1"/>
</dbReference>
<keyword id="KW-0903">Direct protein sequencing</keyword>
<keyword id="KW-1015">Disulfide bond</keyword>
<keyword id="KW-0325">Glycoprotein</keyword>
<keyword id="KW-0646">Protease inhibitor</keyword>
<keyword id="KW-0677">Repeat</keyword>
<keyword id="KW-0964">Secreted</keyword>
<keyword id="KW-0722">Serine protease inhibitor</keyword>
<name>IOVO_OXYVI</name>
<accession>P68132</accession>
<accession>P05572</accession>
<proteinExistence type="evidence at protein level"/>